<evidence type="ECO:0000255" key="1"/>
<evidence type="ECO:0000255" key="2">
    <source>
        <dbReference type="PROSITE-ProRule" id="PRU01163"/>
    </source>
</evidence>
<evidence type="ECO:0000269" key="3">
    <source>
    </source>
</evidence>
<evidence type="ECO:0000269" key="4">
    <source>
    </source>
</evidence>
<evidence type="ECO:0000305" key="5"/>
<gene>
    <name type="primary">mhqE</name>
    <name type="synonym">yodE</name>
    <name type="ordered locus">BSU19570</name>
</gene>
<protein>
    <recommendedName>
        <fullName>Putative ring-cleaving dioxygenase MhqE</fullName>
        <ecNumber>1.13.11.-</ecNumber>
    </recommendedName>
</protein>
<sequence length="303" mass="33851">MKTEGLHHVTAFARDPQENLRFYTEVLGLRLVKKTVNFDDPGTYHFYFGNQNGDPGTIMTFFPFQGSGQGTVGKGQAGRVYFSVPSGSLSFWKERLEKSGLSLEEKTLFGEKGLIFDDTEDLPLAIMEDAKSGKSEWTPDGITTNEAITGMKGVLLYSYDPQATIQLLTESFGYTKVAEEDQIVRLASSAAVGGVIDVHLHPEKRGVGGYGTVHHVAFRTKKKEQAKWLPIIAENHLPSSEILDREYFTSVYFREKGGILFEIATDEPGFMTDETFAELGTSLKLPEWLEKHRQQITDILPEL</sequence>
<accession>O34543</accession>
<accession>Q7BVL4</accession>
<dbReference type="EC" id="1.13.11.-"/>
<dbReference type="EMBL" id="AF015775">
    <property type="protein sequence ID" value="AAB72062.1"/>
    <property type="molecule type" value="Genomic_DNA"/>
</dbReference>
<dbReference type="EMBL" id="AL009126">
    <property type="protein sequence ID" value="CAB13848.1"/>
    <property type="molecule type" value="Genomic_DNA"/>
</dbReference>
<dbReference type="PIR" id="B69903">
    <property type="entry name" value="B69903"/>
</dbReference>
<dbReference type="RefSeq" id="NP_389838.1">
    <property type="nucleotide sequence ID" value="NC_000964.3"/>
</dbReference>
<dbReference type="RefSeq" id="WP_003231191.1">
    <property type="nucleotide sequence ID" value="NZ_OZ025638.1"/>
</dbReference>
<dbReference type="SMR" id="O34543"/>
<dbReference type="FunCoup" id="O34543">
    <property type="interactions" value="62"/>
</dbReference>
<dbReference type="STRING" id="224308.BSU19570"/>
<dbReference type="PaxDb" id="224308-BSU19570"/>
<dbReference type="EnsemblBacteria" id="CAB13848">
    <property type="protein sequence ID" value="CAB13848"/>
    <property type="gene ID" value="BSU_19570"/>
</dbReference>
<dbReference type="GeneID" id="940022"/>
<dbReference type="KEGG" id="bsu:BSU19570"/>
<dbReference type="PATRIC" id="fig|224308.179.peg.2139"/>
<dbReference type="eggNOG" id="COG0346">
    <property type="taxonomic scope" value="Bacteria"/>
</dbReference>
<dbReference type="InParanoid" id="O34543"/>
<dbReference type="OrthoDB" id="9785698at2"/>
<dbReference type="PhylomeDB" id="O34543"/>
<dbReference type="BioCyc" id="BSUB:BSU19570-MONOMER"/>
<dbReference type="Proteomes" id="UP000001570">
    <property type="component" value="Chromosome"/>
</dbReference>
<dbReference type="GO" id="GO:0005737">
    <property type="term" value="C:cytoplasm"/>
    <property type="evidence" value="ECO:0007669"/>
    <property type="project" value="UniProtKB-SubCell"/>
</dbReference>
<dbReference type="GO" id="GO:0051213">
    <property type="term" value="F:dioxygenase activity"/>
    <property type="evidence" value="ECO:0007669"/>
    <property type="project" value="UniProtKB-KW"/>
</dbReference>
<dbReference type="GO" id="GO:0046872">
    <property type="term" value="F:metal ion binding"/>
    <property type="evidence" value="ECO:0007669"/>
    <property type="project" value="UniProtKB-KW"/>
</dbReference>
<dbReference type="GO" id="GO:0009056">
    <property type="term" value="P:catabolic process"/>
    <property type="evidence" value="ECO:0007669"/>
    <property type="project" value="UniProtKB-KW"/>
</dbReference>
<dbReference type="GO" id="GO:0009636">
    <property type="term" value="P:response to toxic substance"/>
    <property type="evidence" value="ECO:0007669"/>
    <property type="project" value="UniProtKB-KW"/>
</dbReference>
<dbReference type="CDD" id="cd08347">
    <property type="entry name" value="PcpA_C_like"/>
    <property type="match status" value="1"/>
</dbReference>
<dbReference type="CDD" id="cd08346">
    <property type="entry name" value="PcpA_N_like"/>
    <property type="match status" value="1"/>
</dbReference>
<dbReference type="Gene3D" id="3.10.180.10">
    <property type="entry name" value="2,3-Dihydroxybiphenyl 1,2-Dioxygenase, domain 1"/>
    <property type="match status" value="2"/>
</dbReference>
<dbReference type="InterPro" id="IPR000595">
    <property type="entry name" value="cNMP-bd_dom"/>
</dbReference>
<dbReference type="InterPro" id="IPR052537">
    <property type="entry name" value="Extradiol_RC_dioxygenase"/>
</dbReference>
<dbReference type="InterPro" id="IPR029068">
    <property type="entry name" value="Glyas_Bleomycin-R_OHBP_Dase"/>
</dbReference>
<dbReference type="InterPro" id="IPR004360">
    <property type="entry name" value="Glyas_Fos-R_dOase_dom"/>
</dbReference>
<dbReference type="InterPro" id="IPR037523">
    <property type="entry name" value="VOC"/>
</dbReference>
<dbReference type="PANTHER" id="PTHR36110">
    <property type="entry name" value="RING-CLEAVING DIOXYGENASE MHQE-RELATED"/>
    <property type="match status" value="1"/>
</dbReference>
<dbReference type="PANTHER" id="PTHR36110:SF2">
    <property type="entry name" value="RING-CLEAVING DIOXYGENASE MHQE-RELATED"/>
    <property type="match status" value="1"/>
</dbReference>
<dbReference type="Pfam" id="PF00903">
    <property type="entry name" value="Glyoxalase"/>
    <property type="match status" value="2"/>
</dbReference>
<dbReference type="SUPFAM" id="SSF54593">
    <property type="entry name" value="Glyoxalase/Bleomycin resistance protein/Dihydroxybiphenyl dioxygenase"/>
    <property type="match status" value="1"/>
</dbReference>
<dbReference type="PROSITE" id="PS51819">
    <property type="entry name" value="VOC"/>
    <property type="match status" value="2"/>
</dbReference>
<feature type="chain" id="PRO_0000360757" description="Putative ring-cleaving dioxygenase MhqE">
    <location>
        <begin position="1"/>
        <end position="303"/>
    </location>
</feature>
<feature type="domain" description="VOC 1" evidence="2">
    <location>
        <begin position="5"/>
        <end position="129"/>
    </location>
</feature>
<feature type="domain" description="VOC 2" evidence="2">
    <location>
        <begin position="150"/>
        <end position="266"/>
    </location>
</feature>
<feature type="binding site" evidence="1">
    <location>
        <position position="8"/>
    </location>
    <ligand>
        <name>Fe cation</name>
        <dbReference type="ChEBI" id="CHEBI:24875"/>
    </ligand>
</feature>
<feature type="binding site" evidence="1">
    <location>
        <position position="215"/>
    </location>
    <ligand>
        <name>Fe cation</name>
        <dbReference type="ChEBI" id="CHEBI:24875"/>
    </ligand>
</feature>
<feature type="binding site" evidence="1">
    <location>
        <position position="262"/>
    </location>
    <ligand>
        <name>Fe cation</name>
        <dbReference type="ChEBI" id="CHEBI:24875"/>
    </ligand>
</feature>
<organism>
    <name type="scientific">Bacillus subtilis (strain 168)</name>
    <dbReference type="NCBI Taxonomy" id="224308"/>
    <lineage>
        <taxon>Bacteria</taxon>
        <taxon>Bacillati</taxon>
        <taxon>Bacillota</taxon>
        <taxon>Bacilli</taxon>
        <taxon>Bacillales</taxon>
        <taxon>Bacillaceae</taxon>
        <taxon>Bacillus</taxon>
    </lineage>
</organism>
<comment type="function">
    <text evidence="5">Putative ring-cleavage dioxygenase that may contribute to the degradation of aromatic compounds.</text>
</comment>
<comment type="cofactor">
    <cofactor evidence="5">
        <name>Fe(2+)</name>
        <dbReference type="ChEBI" id="CHEBI:29033"/>
    </cofactor>
    <text evidence="5">Binds 1 Fe(2+) ion.</text>
</comment>
<comment type="subcellular location">
    <subcellularLocation>
        <location evidence="3 4">Cytoplasm</location>
    </subcellularLocation>
</comment>
<comment type="induction">
    <text evidence="3 4">Repressed by MhqR. Strongly induced by stress due to exposure to 2-methylhydroquinone (2-MHQ) and less strongly induced after diamide or catechol stress. Not induced by oxidative stress due to hydrogen peroxide or methylglyoxal.</text>
</comment>
<comment type="disruption phenotype">
    <text evidence="3">No visible phenotype. Growth is not inhibited by 2-methylhydroquinone or catechol.</text>
</comment>
<comment type="similarity">
    <text evidence="5">Belongs to the extradiol ring-cleavage dioxygenase family.</text>
</comment>
<proteinExistence type="evidence at transcript level"/>
<name>MHQE_BACSU</name>
<keyword id="KW-0058">Aromatic hydrocarbons catabolism</keyword>
<keyword id="KW-0963">Cytoplasm</keyword>
<keyword id="KW-0216">Detoxification</keyword>
<keyword id="KW-0223">Dioxygenase</keyword>
<keyword id="KW-0408">Iron</keyword>
<keyword id="KW-0479">Metal-binding</keyword>
<keyword id="KW-0560">Oxidoreductase</keyword>
<keyword id="KW-1185">Reference proteome</keyword>
<keyword id="KW-0677">Repeat</keyword>
<reference key="1">
    <citation type="journal article" date="1998" name="DNA Res.">
        <title>Sequence analysis of the Bacillus subtilis 168 chromosome region between the sspC and odhA loci (184 degrees-180 degrees).</title>
        <authorList>
            <person name="Ghim S.-Y."/>
            <person name="Choi S.-K."/>
            <person name="Shin B.-S."/>
            <person name="Jeong Y.-M."/>
            <person name="Sorokin A."/>
            <person name="Ehrlich S.D."/>
            <person name="Park S.-H."/>
        </authorList>
    </citation>
    <scope>NUCLEOTIDE SEQUENCE [GENOMIC DNA]</scope>
    <source>
        <strain>168</strain>
    </source>
</reference>
<reference key="2">
    <citation type="journal article" date="1997" name="Nature">
        <title>The complete genome sequence of the Gram-positive bacterium Bacillus subtilis.</title>
        <authorList>
            <person name="Kunst F."/>
            <person name="Ogasawara N."/>
            <person name="Moszer I."/>
            <person name="Albertini A.M."/>
            <person name="Alloni G."/>
            <person name="Azevedo V."/>
            <person name="Bertero M.G."/>
            <person name="Bessieres P."/>
            <person name="Bolotin A."/>
            <person name="Borchert S."/>
            <person name="Borriss R."/>
            <person name="Boursier L."/>
            <person name="Brans A."/>
            <person name="Braun M."/>
            <person name="Brignell S.C."/>
            <person name="Bron S."/>
            <person name="Brouillet S."/>
            <person name="Bruschi C.V."/>
            <person name="Caldwell B."/>
            <person name="Capuano V."/>
            <person name="Carter N.M."/>
            <person name="Choi S.-K."/>
            <person name="Codani J.-J."/>
            <person name="Connerton I.F."/>
            <person name="Cummings N.J."/>
            <person name="Daniel R.A."/>
            <person name="Denizot F."/>
            <person name="Devine K.M."/>
            <person name="Duesterhoeft A."/>
            <person name="Ehrlich S.D."/>
            <person name="Emmerson P.T."/>
            <person name="Entian K.-D."/>
            <person name="Errington J."/>
            <person name="Fabret C."/>
            <person name="Ferrari E."/>
            <person name="Foulger D."/>
            <person name="Fritz C."/>
            <person name="Fujita M."/>
            <person name="Fujita Y."/>
            <person name="Fuma S."/>
            <person name="Galizzi A."/>
            <person name="Galleron N."/>
            <person name="Ghim S.-Y."/>
            <person name="Glaser P."/>
            <person name="Goffeau A."/>
            <person name="Golightly E.J."/>
            <person name="Grandi G."/>
            <person name="Guiseppi G."/>
            <person name="Guy B.J."/>
            <person name="Haga K."/>
            <person name="Haiech J."/>
            <person name="Harwood C.R."/>
            <person name="Henaut A."/>
            <person name="Hilbert H."/>
            <person name="Holsappel S."/>
            <person name="Hosono S."/>
            <person name="Hullo M.-F."/>
            <person name="Itaya M."/>
            <person name="Jones L.-M."/>
            <person name="Joris B."/>
            <person name="Karamata D."/>
            <person name="Kasahara Y."/>
            <person name="Klaerr-Blanchard M."/>
            <person name="Klein C."/>
            <person name="Kobayashi Y."/>
            <person name="Koetter P."/>
            <person name="Koningstein G."/>
            <person name="Krogh S."/>
            <person name="Kumano M."/>
            <person name="Kurita K."/>
            <person name="Lapidus A."/>
            <person name="Lardinois S."/>
            <person name="Lauber J."/>
            <person name="Lazarevic V."/>
            <person name="Lee S.-M."/>
            <person name="Levine A."/>
            <person name="Liu H."/>
            <person name="Masuda S."/>
            <person name="Mauel C."/>
            <person name="Medigue C."/>
            <person name="Medina N."/>
            <person name="Mellado R.P."/>
            <person name="Mizuno M."/>
            <person name="Moestl D."/>
            <person name="Nakai S."/>
            <person name="Noback M."/>
            <person name="Noone D."/>
            <person name="O'Reilly M."/>
            <person name="Ogawa K."/>
            <person name="Ogiwara A."/>
            <person name="Oudega B."/>
            <person name="Park S.-H."/>
            <person name="Parro V."/>
            <person name="Pohl T.M."/>
            <person name="Portetelle D."/>
            <person name="Porwollik S."/>
            <person name="Prescott A.M."/>
            <person name="Presecan E."/>
            <person name="Pujic P."/>
            <person name="Purnelle B."/>
            <person name="Rapoport G."/>
            <person name="Rey M."/>
            <person name="Reynolds S."/>
            <person name="Rieger M."/>
            <person name="Rivolta C."/>
            <person name="Rocha E."/>
            <person name="Roche B."/>
            <person name="Rose M."/>
            <person name="Sadaie Y."/>
            <person name="Sato T."/>
            <person name="Scanlan E."/>
            <person name="Schleich S."/>
            <person name="Schroeter R."/>
            <person name="Scoffone F."/>
            <person name="Sekiguchi J."/>
            <person name="Sekowska A."/>
            <person name="Seror S.J."/>
            <person name="Serror P."/>
            <person name="Shin B.-S."/>
            <person name="Soldo B."/>
            <person name="Sorokin A."/>
            <person name="Tacconi E."/>
            <person name="Takagi T."/>
            <person name="Takahashi H."/>
            <person name="Takemaru K."/>
            <person name="Takeuchi M."/>
            <person name="Tamakoshi A."/>
            <person name="Tanaka T."/>
            <person name="Terpstra P."/>
            <person name="Tognoni A."/>
            <person name="Tosato V."/>
            <person name="Uchiyama S."/>
            <person name="Vandenbol M."/>
            <person name="Vannier F."/>
            <person name="Vassarotti A."/>
            <person name="Viari A."/>
            <person name="Wambutt R."/>
            <person name="Wedler E."/>
            <person name="Wedler H."/>
            <person name="Weitzenegger T."/>
            <person name="Winters P."/>
            <person name="Wipat A."/>
            <person name="Yamamoto H."/>
            <person name="Yamane K."/>
            <person name="Yasumoto K."/>
            <person name="Yata K."/>
            <person name="Yoshida K."/>
            <person name="Yoshikawa H.-F."/>
            <person name="Zumstein E."/>
            <person name="Yoshikawa H."/>
            <person name="Danchin A."/>
        </authorList>
    </citation>
    <scope>NUCLEOTIDE SEQUENCE [LARGE SCALE GENOMIC DNA]</scope>
    <source>
        <strain>168</strain>
    </source>
</reference>
<reference key="3">
    <citation type="journal article" date="2007" name="Mol. Microbiol.">
        <title>The MarR-type repressor MhqR (YkvE) regulates multiple dioxygenases/glyoxalases and an azoreductase which confer resistance to 2-methylhydroquinone and catechol in Bacillus subtilis.</title>
        <authorList>
            <person name="Toewe S."/>
            <person name="Leelakriangsak M."/>
            <person name="Kobayashi K."/>
            <person name="Van Duy N."/>
            <person name="Hecker M."/>
            <person name="Zuber P."/>
            <person name="Antelmann H."/>
        </authorList>
    </citation>
    <scope>INDUCTION</scope>
    <scope>SUBCELLULAR LOCATION</scope>
    <source>
        <strain>168</strain>
    </source>
</reference>
<reference key="4">
    <citation type="journal article" date="2007" name="Proteomics">
        <title>Transcriptome and proteome analyses in response to 2-methylhydroquinone and 6-brom-2-vinyl-chroman-4-on reveal different degradation systems involved in the catabolism of aromatic compounds in Bacillus subtilis.</title>
        <authorList>
            <person name="Nguyen V.D."/>
            <person name="Wolf C."/>
            <person name="Maeder U."/>
            <person name="Lalk M."/>
            <person name="Langer P."/>
            <person name="Lindequist U."/>
            <person name="Hecker M."/>
            <person name="Antelmann H."/>
        </authorList>
    </citation>
    <scope>INDUCTION</scope>
    <scope>DISRUPTION PHENOTYPE</scope>
    <scope>SUBCELLULAR LOCATION</scope>
    <scope>NOMENCLATURE</scope>
</reference>